<proteinExistence type="evidence at protein level"/>
<accession>P21182</accession>
<accession>D6W216</accession>
<gene>
    <name type="primary">SPE2</name>
    <name type="ordered locus">YOL052C</name>
    <name type="ORF">O1275</name>
</gene>
<comment type="function">
    <text evidence="5">Catalyzes the decarboxylation of S-adenosylmethionine, a key step in the biosynthetic pathway for spermidine and spermine. It is essential for normal growth, sporulation, and maintenance of ds-RNA virus.</text>
</comment>
<comment type="catalytic activity">
    <reaction evidence="3">
        <text>S-adenosyl-L-methionine + H(+) = S-adenosyl 3-(methylsulfanyl)propylamine + CO2</text>
        <dbReference type="Rhea" id="RHEA:15981"/>
        <dbReference type="ChEBI" id="CHEBI:15378"/>
        <dbReference type="ChEBI" id="CHEBI:16526"/>
        <dbReference type="ChEBI" id="CHEBI:57443"/>
        <dbReference type="ChEBI" id="CHEBI:59789"/>
        <dbReference type="EC" id="4.1.1.50"/>
    </reaction>
    <physiologicalReaction direction="left-to-right" evidence="5">
        <dbReference type="Rhea" id="RHEA:15982"/>
    </physiologicalReaction>
</comment>
<comment type="cofactor">
    <cofactor>
        <name>pyruvate</name>
        <dbReference type="ChEBI" id="CHEBI:15361"/>
    </cofactor>
    <text evidence="3">Binds 1 pyruvoyl group covalently per subunit.</text>
</comment>
<comment type="pathway">
    <text evidence="5">Amine and polyamine biosynthesis; S-adenosylmethioninamine biosynthesis; S-adenosylmethioninamine from S-adenosyl-L-methionine: step 1/1.</text>
</comment>
<comment type="PTM">
    <text evidence="3">Is synthesized initially as an inactive proenzyme. Formation of the active enzyme involves a self-maturation process in which the active site pyruvoyl group is generated from an internal serine residue via an autocatalytic post-translational modification. Two non-identical subunits are generated from the proenzyme in this reaction, and the pyruvate is formed at the N-terminus of the alpha chain, which is derived from the carboxyl end of the proenzyme. The post-translation cleavage follows an unusual pathway, termed non-hydrolytic serinolysis, in which the side chain hydroxyl group of the serine supplies its oxygen atom to form the C-terminus of the beta chain, while the remainder of the serine residue undergoes an oxidative deamination to produce ammonia and the pyruvoyl group blocking the N-terminus of the alpha chain.</text>
</comment>
<comment type="miscellaneous">
    <text evidence="2">Present with 7060 molecules/cell in log phase SD medium.</text>
</comment>
<comment type="similarity">
    <text evidence="4">Belongs to the eukaryotic AdoMetDC family.</text>
</comment>
<organism>
    <name type="scientific">Saccharomyces cerevisiae (strain ATCC 204508 / S288c)</name>
    <name type="common">Baker's yeast</name>
    <dbReference type="NCBI Taxonomy" id="559292"/>
    <lineage>
        <taxon>Eukaryota</taxon>
        <taxon>Fungi</taxon>
        <taxon>Dikarya</taxon>
        <taxon>Ascomycota</taxon>
        <taxon>Saccharomycotina</taxon>
        <taxon>Saccharomycetes</taxon>
        <taxon>Saccharomycetales</taxon>
        <taxon>Saccharomycetaceae</taxon>
        <taxon>Saccharomyces</taxon>
    </lineage>
</organism>
<dbReference type="EC" id="4.1.1.50" evidence="3"/>
<dbReference type="EMBL" id="M38434">
    <property type="protein sequence ID" value="AAA34421.1"/>
    <property type="molecule type" value="Genomic_DNA"/>
</dbReference>
<dbReference type="EMBL" id="X91067">
    <property type="protein sequence ID" value="CAA62536.1"/>
    <property type="molecule type" value="Genomic_DNA"/>
</dbReference>
<dbReference type="EMBL" id="Z74794">
    <property type="protein sequence ID" value="CAA99058.1"/>
    <property type="molecule type" value="Genomic_DNA"/>
</dbReference>
<dbReference type="EMBL" id="BK006948">
    <property type="protein sequence ID" value="DAA10732.1"/>
    <property type="molecule type" value="Genomic_DNA"/>
</dbReference>
<dbReference type="PIR" id="S12772">
    <property type="entry name" value="DCBYDM"/>
</dbReference>
<dbReference type="RefSeq" id="NP_014590.1">
    <property type="nucleotide sequence ID" value="NM_001183306.1"/>
</dbReference>
<dbReference type="SMR" id="P21182"/>
<dbReference type="BioGRID" id="34352">
    <property type="interactions" value="318"/>
</dbReference>
<dbReference type="DIP" id="DIP-361N"/>
<dbReference type="FunCoup" id="P21182">
    <property type="interactions" value="732"/>
</dbReference>
<dbReference type="IntAct" id="P21182">
    <property type="interactions" value="1"/>
</dbReference>
<dbReference type="MINT" id="P21182"/>
<dbReference type="STRING" id="4932.YOL052C"/>
<dbReference type="iPTMnet" id="P21182"/>
<dbReference type="PaxDb" id="4932-YOL052C"/>
<dbReference type="PeptideAtlas" id="P21182"/>
<dbReference type="EnsemblFungi" id="YOL052C_mRNA">
    <property type="protein sequence ID" value="YOL052C"/>
    <property type="gene ID" value="YOL052C"/>
</dbReference>
<dbReference type="GeneID" id="854105"/>
<dbReference type="KEGG" id="sce:YOL052C"/>
<dbReference type="AGR" id="SGD:S000005412"/>
<dbReference type="SGD" id="S000005412">
    <property type="gene designation" value="SPE2"/>
</dbReference>
<dbReference type="VEuPathDB" id="FungiDB:YOL052C"/>
<dbReference type="eggNOG" id="KOG0788">
    <property type="taxonomic scope" value="Eukaryota"/>
</dbReference>
<dbReference type="GeneTree" id="ENSGT00390000011776"/>
<dbReference type="HOGENOM" id="CLU_023050_0_0_1"/>
<dbReference type="InParanoid" id="P21182"/>
<dbReference type="OMA" id="WFEESSN"/>
<dbReference type="OrthoDB" id="1068353at2759"/>
<dbReference type="BioCyc" id="MetaCyc:MONOMER-20234"/>
<dbReference type="BioCyc" id="YEAST:MONOMER-20234"/>
<dbReference type="BRENDA" id="4.1.1.50">
    <property type="organism ID" value="984"/>
</dbReference>
<dbReference type="Reactome" id="R-SCE-351202">
    <property type="pathway name" value="Metabolism of polyamines"/>
</dbReference>
<dbReference type="UniPathway" id="UPA00331">
    <property type="reaction ID" value="UER00451"/>
</dbReference>
<dbReference type="BioGRID-ORCS" id="854105">
    <property type="hits" value="1 hit in 10 CRISPR screens"/>
</dbReference>
<dbReference type="PRO" id="PR:P21182"/>
<dbReference type="Proteomes" id="UP000002311">
    <property type="component" value="Chromosome XV"/>
</dbReference>
<dbReference type="RNAct" id="P21182">
    <property type="molecule type" value="protein"/>
</dbReference>
<dbReference type="GO" id="GO:0005737">
    <property type="term" value="C:cytoplasm"/>
    <property type="evidence" value="ECO:0007005"/>
    <property type="project" value="SGD"/>
</dbReference>
<dbReference type="GO" id="GO:0005829">
    <property type="term" value="C:cytosol"/>
    <property type="evidence" value="ECO:0000318"/>
    <property type="project" value="GO_Central"/>
</dbReference>
<dbReference type="GO" id="GO:0005634">
    <property type="term" value="C:nucleus"/>
    <property type="evidence" value="ECO:0007005"/>
    <property type="project" value="SGD"/>
</dbReference>
<dbReference type="GO" id="GO:0004014">
    <property type="term" value="F:adenosylmethionine decarboxylase activity"/>
    <property type="evidence" value="ECO:0000314"/>
    <property type="project" value="SGD"/>
</dbReference>
<dbReference type="GO" id="GO:0015940">
    <property type="term" value="P:pantothenate biosynthetic process"/>
    <property type="evidence" value="ECO:0000315"/>
    <property type="project" value="SGD"/>
</dbReference>
<dbReference type="GO" id="GO:0008295">
    <property type="term" value="P:spermidine biosynthetic process"/>
    <property type="evidence" value="ECO:0000315"/>
    <property type="project" value="SGD"/>
</dbReference>
<dbReference type="GO" id="GO:0006597">
    <property type="term" value="P:spermine biosynthetic process"/>
    <property type="evidence" value="ECO:0000315"/>
    <property type="project" value="SGD"/>
</dbReference>
<dbReference type="FunFam" id="3.60.90.10:FF:000011">
    <property type="entry name" value="S-adenosylmethionine decarboxylase proenzyme"/>
    <property type="match status" value="1"/>
</dbReference>
<dbReference type="Gene3D" id="3.60.90.10">
    <property type="entry name" value="S-adenosylmethionine decarboxylase"/>
    <property type="match status" value="1"/>
</dbReference>
<dbReference type="InterPro" id="IPR048283">
    <property type="entry name" value="AdoMetDC-like"/>
</dbReference>
<dbReference type="InterPro" id="IPR001985">
    <property type="entry name" value="S-AdoMet_decarboxylase_euk"/>
</dbReference>
<dbReference type="InterPro" id="IPR016067">
    <property type="entry name" value="S-AdoMet_deCO2ase_core"/>
</dbReference>
<dbReference type="InterPro" id="IPR018166">
    <property type="entry name" value="S-AdoMet_deCO2ase_CS"/>
</dbReference>
<dbReference type="NCBIfam" id="TIGR00535">
    <property type="entry name" value="SAM_DCase"/>
    <property type="match status" value="1"/>
</dbReference>
<dbReference type="PANTHER" id="PTHR11570">
    <property type="entry name" value="S-ADENOSYLMETHIONINE DECARBOXYLASE"/>
    <property type="match status" value="1"/>
</dbReference>
<dbReference type="PANTHER" id="PTHR11570:SF0">
    <property type="entry name" value="S-ADENOSYLMETHIONINE DECARBOXYLASE PROENZYME"/>
    <property type="match status" value="1"/>
</dbReference>
<dbReference type="Pfam" id="PF01536">
    <property type="entry name" value="SAM_decarbox"/>
    <property type="match status" value="1"/>
</dbReference>
<dbReference type="PIRSF" id="PIRSF001355">
    <property type="entry name" value="S-AdenosylMet_decarboxylase"/>
    <property type="match status" value="1"/>
</dbReference>
<dbReference type="SUPFAM" id="SSF56276">
    <property type="entry name" value="S-adenosylmethionine decarboxylase"/>
    <property type="match status" value="1"/>
</dbReference>
<dbReference type="PROSITE" id="PS01336">
    <property type="entry name" value="ADOMETDC"/>
    <property type="match status" value="1"/>
</dbReference>
<keyword id="KW-0068">Autocatalytic cleavage</keyword>
<keyword id="KW-0210">Decarboxylase</keyword>
<keyword id="KW-0903">Direct protein sequencing</keyword>
<keyword id="KW-0456">Lyase</keyword>
<keyword id="KW-0620">Polyamine biosynthesis</keyword>
<keyword id="KW-0670">Pyruvate</keyword>
<keyword id="KW-1185">Reference proteome</keyword>
<keyword id="KW-0949">S-adenosyl-L-methionine</keyword>
<keyword id="KW-0704">Schiff base</keyword>
<keyword id="KW-0745">Spermidine biosynthesis</keyword>
<keyword id="KW-0865">Zymogen</keyword>
<reference key="1">
    <citation type="journal article" date="1990" name="J. Biol. Chem.">
        <title>Spermidine biosynthesis in Saccharomyces cerevisiae. Biosynthesis and processing of a proenzyme form of S-adenosylmethionine decarboxylase.</title>
        <authorList>
            <person name="Kashiwagi K."/>
            <person name="Taneja S.K."/>
            <person name="Liu T.-Y."/>
            <person name="Tabor C.W."/>
            <person name="Tabor H."/>
        </authorList>
    </citation>
    <scope>NUCLEOTIDE SEQUENCE [GENOMIC DNA]</scope>
    <scope>PROTEIN SEQUENCE OF 2-20 AND 88-104</scope>
    <scope>FUNCTION</scope>
    <scope>CATALYTIC ACTIVITY</scope>
    <scope>PYRUVATE FORMATION AT SER-88</scope>
</reference>
<reference key="2">
    <citation type="journal article" date="1996" name="Yeast">
        <title>Analysis of a 26 kb region on the left arm of yeast chromosome XV.</title>
        <authorList>
            <person name="Mannhaupt G."/>
            <person name="Vetter I."/>
            <person name="Schwarzlose C."/>
            <person name="Mitzel S."/>
            <person name="Feldmann H."/>
        </authorList>
    </citation>
    <scope>NUCLEOTIDE SEQUENCE [GENOMIC DNA]</scope>
    <source>
        <strain>ATCC 90843 / S288c / FY73</strain>
    </source>
</reference>
<reference key="3">
    <citation type="journal article" date="1997" name="Nature">
        <title>The nucleotide sequence of Saccharomyces cerevisiae chromosome XV.</title>
        <authorList>
            <person name="Dujon B."/>
            <person name="Albermann K."/>
            <person name="Aldea M."/>
            <person name="Alexandraki D."/>
            <person name="Ansorge W."/>
            <person name="Arino J."/>
            <person name="Benes V."/>
            <person name="Bohn C."/>
            <person name="Bolotin-Fukuhara M."/>
            <person name="Bordonne R."/>
            <person name="Boyer J."/>
            <person name="Camasses A."/>
            <person name="Casamayor A."/>
            <person name="Casas C."/>
            <person name="Cheret G."/>
            <person name="Cziepluch C."/>
            <person name="Daignan-Fornier B."/>
            <person name="Dang V.-D."/>
            <person name="de Haan M."/>
            <person name="Delius H."/>
            <person name="Durand P."/>
            <person name="Fairhead C."/>
            <person name="Feldmann H."/>
            <person name="Gaillon L."/>
            <person name="Galisson F."/>
            <person name="Gamo F.-J."/>
            <person name="Gancedo C."/>
            <person name="Goffeau A."/>
            <person name="Goulding S.E."/>
            <person name="Grivell L.A."/>
            <person name="Habbig B."/>
            <person name="Hand N.J."/>
            <person name="Hani J."/>
            <person name="Hattenhorst U."/>
            <person name="Hebling U."/>
            <person name="Hernando Y."/>
            <person name="Herrero E."/>
            <person name="Heumann K."/>
            <person name="Hiesel R."/>
            <person name="Hilger F."/>
            <person name="Hofmann B."/>
            <person name="Hollenberg C.P."/>
            <person name="Hughes B."/>
            <person name="Jauniaux J.-C."/>
            <person name="Kalogeropoulos A."/>
            <person name="Katsoulou C."/>
            <person name="Kordes E."/>
            <person name="Lafuente M.J."/>
            <person name="Landt O."/>
            <person name="Louis E.J."/>
            <person name="Maarse A.C."/>
            <person name="Madania A."/>
            <person name="Mannhaupt G."/>
            <person name="Marck C."/>
            <person name="Martin R.P."/>
            <person name="Mewes H.-W."/>
            <person name="Michaux G."/>
            <person name="Paces V."/>
            <person name="Parle-McDermott A.G."/>
            <person name="Pearson B.M."/>
            <person name="Perrin A."/>
            <person name="Pettersson B."/>
            <person name="Poch O."/>
            <person name="Pohl T.M."/>
            <person name="Poirey R."/>
            <person name="Portetelle D."/>
            <person name="Pujol A."/>
            <person name="Purnelle B."/>
            <person name="Ramezani Rad M."/>
            <person name="Rechmann S."/>
            <person name="Schwager C."/>
            <person name="Schweizer M."/>
            <person name="Sor F."/>
            <person name="Sterky F."/>
            <person name="Tarassov I.A."/>
            <person name="Teodoru C."/>
            <person name="Tettelin H."/>
            <person name="Thierry A."/>
            <person name="Tobiasch E."/>
            <person name="Tzermia M."/>
            <person name="Uhlen M."/>
            <person name="Unseld M."/>
            <person name="Valens M."/>
            <person name="Vandenbol M."/>
            <person name="Vetter I."/>
            <person name="Vlcek C."/>
            <person name="Voet M."/>
            <person name="Volckaert G."/>
            <person name="Voss H."/>
            <person name="Wambutt R."/>
            <person name="Wedler H."/>
            <person name="Wiemann S."/>
            <person name="Winsor B."/>
            <person name="Wolfe K.H."/>
            <person name="Zollner A."/>
            <person name="Zumstein E."/>
            <person name="Kleine K."/>
        </authorList>
    </citation>
    <scope>NUCLEOTIDE SEQUENCE [LARGE SCALE GENOMIC DNA]</scope>
    <source>
        <strain>ATCC 204508 / S288c</strain>
    </source>
</reference>
<reference key="4">
    <citation type="journal article" date="2014" name="G3 (Bethesda)">
        <title>The reference genome sequence of Saccharomyces cerevisiae: Then and now.</title>
        <authorList>
            <person name="Engel S.R."/>
            <person name="Dietrich F.S."/>
            <person name="Fisk D.G."/>
            <person name="Binkley G."/>
            <person name="Balakrishnan R."/>
            <person name="Costanzo M.C."/>
            <person name="Dwight S.S."/>
            <person name="Hitz B.C."/>
            <person name="Karra K."/>
            <person name="Nash R.S."/>
            <person name="Weng S."/>
            <person name="Wong E.D."/>
            <person name="Lloyd P."/>
            <person name="Skrzypek M.S."/>
            <person name="Miyasato S.R."/>
            <person name="Simison M."/>
            <person name="Cherry J.M."/>
        </authorList>
    </citation>
    <scope>GENOME REANNOTATION</scope>
    <source>
        <strain>ATCC 204508 / S288c</strain>
    </source>
</reference>
<reference key="5">
    <citation type="journal article" date="2003" name="Nature">
        <title>Global analysis of protein expression in yeast.</title>
        <authorList>
            <person name="Ghaemmaghami S."/>
            <person name="Huh W.-K."/>
            <person name="Bower K."/>
            <person name="Howson R.W."/>
            <person name="Belle A."/>
            <person name="Dephoure N."/>
            <person name="O'Shea E.K."/>
            <person name="Weissman J.S."/>
        </authorList>
    </citation>
    <scope>LEVEL OF PROTEIN EXPRESSION [LARGE SCALE ANALYSIS]</scope>
</reference>
<feature type="initiator methionine" description="Removed" evidence="3">
    <location>
        <position position="1"/>
    </location>
</feature>
<feature type="chain" id="PRO_0000030033" description="S-adenosylmethionine decarboxylase beta chain">
    <location>
        <begin position="2"/>
        <end position="87"/>
    </location>
</feature>
<feature type="chain" id="PRO_0000030034" description="S-adenosylmethionine decarboxylase alpha chain">
    <location>
        <begin position="88"/>
        <end position="396"/>
    </location>
</feature>
<feature type="active site" evidence="1">
    <location>
        <position position="29"/>
    </location>
</feature>
<feature type="active site" evidence="1">
    <location>
        <position position="32"/>
    </location>
</feature>
<feature type="active site" description="Schiff-base intermediate with substrate; via pyruvic acid" evidence="3">
    <location>
        <position position="88"/>
    </location>
</feature>
<feature type="active site" description="Proton donor; for catalytic activity" evidence="1">
    <location>
        <position position="102"/>
    </location>
</feature>
<feature type="active site" description="Proton acceptor; for processing activity" evidence="1">
    <location>
        <position position="287"/>
    </location>
</feature>
<feature type="active site" description="Proton acceptor; for processing activity" evidence="1">
    <location>
        <position position="301"/>
    </location>
</feature>
<feature type="site" description="Cleavage (non-hydrolytic); by autolysis" evidence="3">
    <location>
        <begin position="87"/>
        <end position="88"/>
    </location>
</feature>
<feature type="modified residue" description="Pyruvic acid (Ser); by autocatalysis" evidence="3">
    <location>
        <position position="88"/>
    </location>
</feature>
<evidence type="ECO:0000250" key="1"/>
<evidence type="ECO:0000269" key="2">
    <source>
    </source>
</evidence>
<evidence type="ECO:0000269" key="3">
    <source>
    </source>
</evidence>
<evidence type="ECO:0000305" key="4"/>
<evidence type="ECO:0000305" key="5">
    <source>
    </source>
</evidence>
<protein>
    <recommendedName>
        <fullName>S-adenosylmethionine decarboxylase proenzyme</fullName>
        <shortName>AdoMetDC</shortName>
        <shortName>SAMDC</shortName>
        <ecNumber evidence="3">4.1.1.50</ecNumber>
    </recommendedName>
    <component>
        <recommendedName>
            <fullName>S-adenosylmethionine decarboxylase alpha chain</fullName>
        </recommendedName>
    </component>
    <component>
        <recommendedName>
            <fullName>S-adenosylmethionine decarboxylase beta chain</fullName>
        </recommendedName>
    </component>
</protein>
<name>DCAM_YEAST</name>
<sequence length="396" mass="46232">MTVTIKELTNHNYIDHELSATLDSTDAFEGPEKLLEIWFFPHKKSITTEKTLRNIGMDRWIEILKLVKCEVLSMKKTKELDAFLLSESSLFVFDHKLTMKTCGTTTTLFCLEKLFQIVEQELSWAFRTTQGGKYKPFKVFYSRRCFLFPCKQAAIHQNWADEVDYLNKFFDNGKSYSVGRNDKSNHWNLYVTETDRSTPKGKEYIEDDDETFEVLMTELDPECASKFVCGPEASTTALVEPNEDKGHNLGYQMTKNTRLDEIYVNSAQDSDLSFHHDAFAFTPCGYSSNMILAEKYYYTLHVTPEKGWSYASFESNIPVFDISQGKQDNLDVLLHILNVFQPREFSMTFFTKNYQNQSFQKLLSINESLPDYIKLDKIVYDLDDYHLFYMKLQKKI</sequence>